<accession>B5FMM7</accession>
<protein>
    <recommendedName>
        <fullName evidence="1">Probable Sec-independent protein translocase protein TatE</fullName>
    </recommendedName>
</protein>
<reference key="1">
    <citation type="journal article" date="2011" name="J. Bacteriol.">
        <title>Comparative genomics of 28 Salmonella enterica isolates: evidence for CRISPR-mediated adaptive sublineage evolution.</title>
        <authorList>
            <person name="Fricke W.F."/>
            <person name="Mammel M.K."/>
            <person name="McDermott P.F."/>
            <person name="Tartera C."/>
            <person name="White D.G."/>
            <person name="Leclerc J.E."/>
            <person name="Ravel J."/>
            <person name="Cebula T.A."/>
        </authorList>
    </citation>
    <scope>NUCLEOTIDE SEQUENCE [LARGE SCALE GENOMIC DNA]</scope>
    <source>
        <strain>CT_02021853</strain>
    </source>
</reference>
<name>TATE_SALDC</name>
<gene>
    <name evidence="1" type="primary">tatE</name>
    <name type="ordered locus">SeD_A0733</name>
</gene>
<dbReference type="EMBL" id="CP001144">
    <property type="protein sequence ID" value="ACH77830.1"/>
    <property type="molecule type" value="Genomic_DNA"/>
</dbReference>
<dbReference type="RefSeq" id="WP_000503938.1">
    <property type="nucleotide sequence ID" value="NC_011205.1"/>
</dbReference>
<dbReference type="SMR" id="B5FMM7"/>
<dbReference type="KEGG" id="sed:SeD_A0733"/>
<dbReference type="HOGENOM" id="CLU_086034_5_3_6"/>
<dbReference type="Proteomes" id="UP000008322">
    <property type="component" value="Chromosome"/>
</dbReference>
<dbReference type="GO" id="GO:0033281">
    <property type="term" value="C:TAT protein transport complex"/>
    <property type="evidence" value="ECO:0007669"/>
    <property type="project" value="UniProtKB-UniRule"/>
</dbReference>
<dbReference type="GO" id="GO:0008320">
    <property type="term" value="F:protein transmembrane transporter activity"/>
    <property type="evidence" value="ECO:0007669"/>
    <property type="project" value="UniProtKB-UniRule"/>
</dbReference>
<dbReference type="GO" id="GO:0043953">
    <property type="term" value="P:protein transport by the Tat complex"/>
    <property type="evidence" value="ECO:0007669"/>
    <property type="project" value="UniProtKB-UniRule"/>
</dbReference>
<dbReference type="FunFam" id="1.20.5.3310:FF:000001">
    <property type="entry name" value="Probable Sec-independent protein translocase protein TatE"/>
    <property type="match status" value="1"/>
</dbReference>
<dbReference type="Gene3D" id="1.20.5.3310">
    <property type="match status" value="1"/>
</dbReference>
<dbReference type="HAMAP" id="MF_00236">
    <property type="entry name" value="TatA_E"/>
    <property type="match status" value="1"/>
</dbReference>
<dbReference type="HAMAP" id="MF_00903">
    <property type="entry name" value="TatE"/>
    <property type="match status" value="1"/>
</dbReference>
<dbReference type="InterPro" id="IPR003369">
    <property type="entry name" value="TatA/B/E"/>
</dbReference>
<dbReference type="InterPro" id="IPR006312">
    <property type="entry name" value="TatA/E"/>
</dbReference>
<dbReference type="InterPro" id="IPR024905">
    <property type="entry name" value="TatE"/>
</dbReference>
<dbReference type="NCBIfam" id="NF002448">
    <property type="entry name" value="PRK01614.1"/>
    <property type="match status" value="1"/>
</dbReference>
<dbReference type="NCBIfam" id="NF002960">
    <property type="entry name" value="PRK03625.1"/>
    <property type="match status" value="1"/>
</dbReference>
<dbReference type="NCBIfam" id="TIGR01411">
    <property type="entry name" value="tatAE"/>
    <property type="match status" value="1"/>
</dbReference>
<dbReference type="PANTHER" id="PTHR42982">
    <property type="entry name" value="SEC-INDEPENDENT PROTEIN TRANSLOCASE PROTEIN TATA"/>
    <property type="match status" value="1"/>
</dbReference>
<dbReference type="PANTHER" id="PTHR42982:SF5">
    <property type="entry name" value="SEC-INDEPENDENT PROTEIN TRANSLOCASE PROTEIN TATE"/>
    <property type="match status" value="1"/>
</dbReference>
<dbReference type="Pfam" id="PF02416">
    <property type="entry name" value="TatA_B_E"/>
    <property type="match status" value="1"/>
</dbReference>
<organism>
    <name type="scientific">Salmonella dublin (strain CT_02021853)</name>
    <dbReference type="NCBI Taxonomy" id="439851"/>
    <lineage>
        <taxon>Bacteria</taxon>
        <taxon>Pseudomonadati</taxon>
        <taxon>Pseudomonadota</taxon>
        <taxon>Gammaproteobacteria</taxon>
        <taxon>Enterobacterales</taxon>
        <taxon>Enterobacteriaceae</taxon>
        <taxon>Salmonella</taxon>
    </lineage>
</organism>
<proteinExistence type="inferred from homology"/>
<sequence>MGEISITKLLVVAALVVLLFGTKKLRTLGGDLGTAIKGFKKAMNDEDAGVKKDVDGSVQAEKLSHKE</sequence>
<feature type="chain" id="PRO_0000412973" description="Probable Sec-independent protein translocase protein TatE">
    <location>
        <begin position="1"/>
        <end position="67"/>
    </location>
</feature>
<feature type="transmembrane region" description="Helical" evidence="1">
    <location>
        <begin position="4"/>
        <end position="21"/>
    </location>
</feature>
<comment type="function">
    <text evidence="1">Part of the twin-arginine translocation (Tat) system that transports large folded proteins containing a characteristic twin-arginine motif in their signal peptide across membranes. TatE shares overlapping functions with TatA.</text>
</comment>
<comment type="subcellular location">
    <subcellularLocation>
        <location evidence="1">Cell inner membrane</location>
        <topology evidence="1">Single-pass membrane protein</topology>
    </subcellularLocation>
</comment>
<comment type="similarity">
    <text evidence="1">Belongs to the TatA/E family. TatE subfamily.</text>
</comment>
<keyword id="KW-0997">Cell inner membrane</keyword>
<keyword id="KW-1003">Cell membrane</keyword>
<keyword id="KW-0472">Membrane</keyword>
<keyword id="KW-0653">Protein transport</keyword>
<keyword id="KW-0811">Translocation</keyword>
<keyword id="KW-0812">Transmembrane</keyword>
<keyword id="KW-1133">Transmembrane helix</keyword>
<keyword id="KW-0813">Transport</keyword>
<evidence type="ECO:0000255" key="1">
    <source>
        <dbReference type="HAMAP-Rule" id="MF_00903"/>
    </source>
</evidence>